<comment type="function">
    <text evidence="1">Enables the recognition and targeting of unfolded and aggregated proteins to the ClpC protease or to other proteins involved in proteolysis. Acts negatively in the development of competence by binding ComK and recruiting it to the ClpCP protease. When overexpressed, inhibits sporulation. Also involved in Spx degradation by ClpC.</text>
</comment>
<comment type="subunit">
    <text evidence="1">Homodimer.</text>
</comment>
<comment type="domain">
    <text>The N-terminal domain has binding sites for ComK and probably for unfolded/aggregated proteins; the C-terminal domain interacts with ClpC.</text>
</comment>
<comment type="similarity">
    <text evidence="1">Belongs to the MecA family.</text>
</comment>
<sequence>MRIERVSTDQFKIFLTFDDLIERGFTREDLWHDASNVRSLFSDMMYEASSELGIELEGMLLVQVHLMQAQGMHIFVTQQYEDNSEDEDYIEMKVTLDESKELIFSFMDFEDIISVTSYLDPMGLENIRLYYMEDRYYMILDHIELSRVDKEDIIGVMSEYANPSIVTSHRIEEYGKLIMEENTVQQIKRFFY</sequence>
<keyword id="KW-0178">Competence</keyword>
<keyword id="KW-1185">Reference proteome</keyword>
<reference key="1">
    <citation type="journal article" date="2002" name="Nucleic Acids Res.">
        <title>Genome sequence of Oceanobacillus iheyensis isolated from the Iheya Ridge and its unexpected adaptive capabilities to extreme environments.</title>
        <authorList>
            <person name="Takami H."/>
            <person name="Takaki Y."/>
            <person name="Uchiyama I."/>
        </authorList>
    </citation>
    <scope>NUCLEOTIDE SEQUENCE [LARGE SCALE GENOMIC DNA]</scope>
    <source>
        <strain>DSM 14371 / CIP 107618 / JCM 11309 / KCTC 3954 / HTE831</strain>
    </source>
</reference>
<evidence type="ECO:0000255" key="1">
    <source>
        <dbReference type="HAMAP-Rule" id="MF_01124"/>
    </source>
</evidence>
<dbReference type="EMBL" id="BA000028">
    <property type="protein sequence ID" value="BAC13767.1"/>
    <property type="molecule type" value="Genomic_DNA"/>
</dbReference>
<dbReference type="RefSeq" id="WP_011066209.1">
    <property type="nucleotide sequence ID" value="NC_004193.1"/>
</dbReference>
<dbReference type="SMR" id="Q8EQ97"/>
<dbReference type="STRING" id="221109.gene:10734051"/>
<dbReference type="KEGG" id="oih:OB1811"/>
<dbReference type="eggNOG" id="COG4862">
    <property type="taxonomic scope" value="Bacteria"/>
</dbReference>
<dbReference type="HOGENOM" id="CLU_071496_3_0_9"/>
<dbReference type="OrthoDB" id="2085234at2"/>
<dbReference type="PhylomeDB" id="Q8EQ97"/>
<dbReference type="Proteomes" id="UP000000822">
    <property type="component" value="Chromosome"/>
</dbReference>
<dbReference type="GO" id="GO:0030674">
    <property type="term" value="F:protein-macromolecule adaptor activity"/>
    <property type="evidence" value="ECO:0007669"/>
    <property type="project" value="UniProtKB-UniRule"/>
</dbReference>
<dbReference type="GO" id="GO:0030420">
    <property type="term" value="P:establishment of competence for transformation"/>
    <property type="evidence" value="ECO:0007669"/>
    <property type="project" value="UniProtKB-KW"/>
</dbReference>
<dbReference type="GO" id="GO:0045808">
    <property type="term" value="P:negative regulation of establishment of competence for transformation"/>
    <property type="evidence" value="ECO:0007669"/>
    <property type="project" value="UniProtKB-UniRule"/>
</dbReference>
<dbReference type="GO" id="GO:0042174">
    <property type="term" value="P:negative regulation of sporulation resulting in formation of a cellular spore"/>
    <property type="evidence" value="ECO:0007669"/>
    <property type="project" value="UniProtKB-UniRule"/>
</dbReference>
<dbReference type="Gene3D" id="3.30.70.1950">
    <property type="match status" value="1"/>
</dbReference>
<dbReference type="HAMAP" id="MF_01124">
    <property type="entry name" value="MecA"/>
    <property type="match status" value="1"/>
</dbReference>
<dbReference type="InterPro" id="IPR038471">
    <property type="entry name" value="MecA_C_sf"/>
</dbReference>
<dbReference type="InterPro" id="IPR008681">
    <property type="entry name" value="Neg-reg_MecA"/>
</dbReference>
<dbReference type="NCBIfam" id="NF002781">
    <property type="entry name" value="PRK02899.1"/>
    <property type="match status" value="1"/>
</dbReference>
<dbReference type="PANTHER" id="PTHR39161">
    <property type="entry name" value="ADAPTER PROTEIN MECA"/>
    <property type="match status" value="1"/>
</dbReference>
<dbReference type="PANTHER" id="PTHR39161:SF2">
    <property type="entry name" value="ADAPTER PROTEIN MECA 2"/>
    <property type="match status" value="1"/>
</dbReference>
<dbReference type="Pfam" id="PF05389">
    <property type="entry name" value="MecA"/>
    <property type="match status" value="2"/>
</dbReference>
<dbReference type="PIRSF" id="PIRSF029008">
    <property type="entry name" value="MecA"/>
    <property type="match status" value="1"/>
</dbReference>
<name>MECA_OCEIH</name>
<accession>Q8EQ97</accession>
<proteinExistence type="inferred from homology"/>
<feature type="chain" id="PRO_0000212275" description="Adapter protein MecA">
    <location>
        <begin position="1"/>
        <end position="192"/>
    </location>
</feature>
<protein>
    <recommendedName>
        <fullName evidence="1">Adapter protein MecA</fullName>
    </recommendedName>
</protein>
<organism>
    <name type="scientific">Oceanobacillus iheyensis (strain DSM 14371 / CIP 107618 / JCM 11309 / KCTC 3954 / HTE831)</name>
    <dbReference type="NCBI Taxonomy" id="221109"/>
    <lineage>
        <taxon>Bacteria</taxon>
        <taxon>Bacillati</taxon>
        <taxon>Bacillota</taxon>
        <taxon>Bacilli</taxon>
        <taxon>Bacillales</taxon>
        <taxon>Bacillaceae</taxon>
        <taxon>Oceanobacillus</taxon>
    </lineage>
</organism>
<gene>
    <name evidence="1" type="primary">mecA</name>
    <name type="ordered locus">OB1811</name>
</gene>